<comment type="function">
    <text evidence="2">With S4 and S5 plays an important role in translational accuracy.</text>
</comment>
<comment type="function">
    <text evidence="2">Interacts with and stabilizes bases of the 16S rRNA that are involved in tRNA selection in the A site and with the mRNA backbone. Located at the interface of the 30S and 50S subunits, it traverses the body of the 30S subunit contacting proteins on the other side and probably holding the rRNA structure together. The combined cluster of proteins S8, S12 and S17 appears to hold together the shoulder and platform of the 30S subunit.</text>
</comment>
<comment type="subunit">
    <text evidence="2">Part of the 30S ribosomal subunit. Contacts proteins S8 and S17. May interact with IF1 in the 30S initiation complex.</text>
</comment>
<comment type="similarity">
    <text evidence="2">Belongs to the universal ribosomal protein uS12 family.</text>
</comment>
<reference key="1">
    <citation type="journal article" date="2009" name="Appl. Environ. Microbiol.">
        <title>Genomic analysis of 'Elusimicrobium minutum,' the first cultivated representative of the phylum 'Elusimicrobia' (formerly termite group 1).</title>
        <authorList>
            <person name="Herlemann D.P.R."/>
            <person name="Geissinger O."/>
            <person name="Ikeda-Ohtsubo W."/>
            <person name="Kunin V."/>
            <person name="Sun H."/>
            <person name="Lapidus A."/>
            <person name="Hugenholtz P."/>
            <person name="Brune A."/>
        </authorList>
    </citation>
    <scope>NUCLEOTIDE SEQUENCE [LARGE SCALE GENOMIC DNA]</scope>
    <source>
        <strain>Pei191</strain>
    </source>
</reference>
<gene>
    <name evidence="2" type="primary">rpsL</name>
    <name type="ordered locus">Emin_1426</name>
</gene>
<feature type="chain" id="PRO_1000194159" description="Small ribosomal subunit protein uS12">
    <location>
        <begin position="1"/>
        <end position="126"/>
    </location>
</feature>
<feature type="region of interest" description="Disordered" evidence="3">
    <location>
        <begin position="1"/>
        <end position="24"/>
    </location>
</feature>
<feature type="compositionally biased region" description="Polar residues" evidence="3">
    <location>
        <begin position="1"/>
        <end position="16"/>
    </location>
</feature>
<feature type="modified residue" description="3-methylthioaspartic acid" evidence="1">
    <location>
        <position position="89"/>
    </location>
</feature>
<dbReference type="EMBL" id="CP001055">
    <property type="protein sequence ID" value="ACC98975.1"/>
    <property type="molecule type" value="Genomic_DNA"/>
</dbReference>
<dbReference type="RefSeq" id="WP_012415590.1">
    <property type="nucleotide sequence ID" value="NC_010644.1"/>
</dbReference>
<dbReference type="SMR" id="B2KEM9"/>
<dbReference type="STRING" id="445932.Emin_1426"/>
<dbReference type="KEGG" id="emi:Emin_1426"/>
<dbReference type="HOGENOM" id="CLU_104295_1_2_0"/>
<dbReference type="OrthoDB" id="9802366at2"/>
<dbReference type="Proteomes" id="UP000001029">
    <property type="component" value="Chromosome"/>
</dbReference>
<dbReference type="GO" id="GO:0015935">
    <property type="term" value="C:small ribosomal subunit"/>
    <property type="evidence" value="ECO:0007669"/>
    <property type="project" value="InterPro"/>
</dbReference>
<dbReference type="GO" id="GO:0019843">
    <property type="term" value="F:rRNA binding"/>
    <property type="evidence" value="ECO:0007669"/>
    <property type="project" value="UniProtKB-UniRule"/>
</dbReference>
<dbReference type="GO" id="GO:0003735">
    <property type="term" value="F:structural constituent of ribosome"/>
    <property type="evidence" value="ECO:0007669"/>
    <property type="project" value="InterPro"/>
</dbReference>
<dbReference type="GO" id="GO:0000049">
    <property type="term" value="F:tRNA binding"/>
    <property type="evidence" value="ECO:0007669"/>
    <property type="project" value="UniProtKB-UniRule"/>
</dbReference>
<dbReference type="GO" id="GO:0006412">
    <property type="term" value="P:translation"/>
    <property type="evidence" value="ECO:0007669"/>
    <property type="project" value="UniProtKB-UniRule"/>
</dbReference>
<dbReference type="CDD" id="cd03368">
    <property type="entry name" value="Ribosomal_S12"/>
    <property type="match status" value="1"/>
</dbReference>
<dbReference type="FunFam" id="2.40.50.140:FF:000001">
    <property type="entry name" value="30S ribosomal protein S12"/>
    <property type="match status" value="1"/>
</dbReference>
<dbReference type="Gene3D" id="2.40.50.140">
    <property type="entry name" value="Nucleic acid-binding proteins"/>
    <property type="match status" value="1"/>
</dbReference>
<dbReference type="HAMAP" id="MF_00403_B">
    <property type="entry name" value="Ribosomal_uS12_B"/>
    <property type="match status" value="1"/>
</dbReference>
<dbReference type="InterPro" id="IPR012340">
    <property type="entry name" value="NA-bd_OB-fold"/>
</dbReference>
<dbReference type="InterPro" id="IPR006032">
    <property type="entry name" value="Ribosomal_uS12"/>
</dbReference>
<dbReference type="InterPro" id="IPR005679">
    <property type="entry name" value="Ribosomal_uS12_bac"/>
</dbReference>
<dbReference type="NCBIfam" id="TIGR00981">
    <property type="entry name" value="rpsL_bact"/>
    <property type="match status" value="1"/>
</dbReference>
<dbReference type="PANTHER" id="PTHR11652">
    <property type="entry name" value="30S RIBOSOMAL PROTEIN S12 FAMILY MEMBER"/>
    <property type="match status" value="1"/>
</dbReference>
<dbReference type="Pfam" id="PF00164">
    <property type="entry name" value="Ribosom_S12_S23"/>
    <property type="match status" value="1"/>
</dbReference>
<dbReference type="PIRSF" id="PIRSF002133">
    <property type="entry name" value="Ribosomal_S12/S23"/>
    <property type="match status" value="1"/>
</dbReference>
<dbReference type="PRINTS" id="PR01034">
    <property type="entry name" value="RIBOSOMALS12"/>
</dbReference>
<dbReference type="SUPFAM" id="SSF50249">
    <property type="entry name" value="Nucleic acid-binding proteins"/>
    <property type="match status" value="1"/>
</dbReference>
<dbReference type="PROSITE" id="PS00055">
    <property type="entry name" value="RIBOSOMAL_S12"/>
    <property type="match status" value="1"/>
</dbReference>
<organism>
    <name type="scientific">Elusimicrobium minutum (strain Pei191)</name>
    <dbReference type="NCBI Taxonomy" id="445932"/>
    <lineage>
        <taxon>Bacteria</taxon>
        <taxon>Pseudomonadati</taxon>
        <taxon>Elusimicrobiota</taxon>
        <taxon>Elusimicrobia</taxon>
        <taxon>Elusimicrobiales</taxon>
        <taxon>Elusimicrobiaceae</taxon>
        <taxon>Elusimicrobium</taxon>
    </lineage>
</organism>
<protein>
    <recommendedName>
        <fullName evidence="2">Small ribosomal subunit protein uS12</fullName>
    </recommendedName>
    <alternativeName>
        <fullName evidence="4">30S ribosomal protein S12</fullName>
    </alternativeName>
</protein>
<keyword id="KW-0488">Methylation</keyword>
<keyword id="KW-1185">Reference proteome</keyword>
<keyword id="KW-0687">Ribonucleoprotein</keyword>
<keyword id="KW-0689">Ribosomal protein</keyword>
<keyword id="KW-0694">RNA-binding</keyword>
<keyword id="KW-0699">rRNA-binding</keyword>
<keyword id="KW-0820">tRNA-binding</keyword>
<name>RS12_ELUMP</name>
<accession>B2KEM9</accession>
<sequence>MPTVNQLVRQGRTMNKTKTKSPALMSCPQRRGVCTRVYTTTPKKPNSALRKVARVKLTSKVEVTAYIPGVGHNLQEHSIVLVRGGRVKDLPGVRYHIIRGALDASGVENRKQGRSLYGVKRPKAAK</sequence>
<evidence type="ECO:0000250" key="1"/>
<evidence type="ECO:0000255" key="2">
    <source>
        <dbReference type="HAMAP-Rule" id="MF_00403"/>
    </source>
</evidence>
<evidence type="ECO:0000256" key="3">
    <source>
        <dbReference type="SAM" id="MobiDB-lite"/>
    </source>
</evidence>
<evidence type="ECO:0000305" key="4"/>
<proteinExistence type="inferred from homology"/>